<accession>C5BWL5</accession>
<feature type="chain" id="PRO_1000206109" description="Transcriptional repressor NrdR">
    <location>
        <begin position="1"/>
        <end position="170"/>
    </location>
</feature>
<feature type="domain" description="ATP-cone" evidence="1">
    <location>
        <begin position="46"/>
        <end position="136"/>
    </location>
</feature>
<feature type="zinc finger region" evidence="1">
    <location>
        <begin position="3"/>
        <end position="34"/>
    </location>
</feature>
<feature type="region of interest" description="Disordered" evidence="2">
    <location>
        <begin position="148"/>
        <end position="170"/>
    </location>
</feature>
<dbReference type="EMBL" id="CP001618">
    <property type="protein sequence ID" value="ACQ80681.1"/>
    <property type="molecule type" value="Genomic_DNA"/>
</dbReference>
<dbReference type="RefSeq" id="WP_015882921.1">
    <property type="nucleotide sequence ID" value="NC_012669.1"/>
</dbReference>
<dbReference type="SMR" id="C5BWL5"/>
<dbReference type="STRING" id="471853.Bcav_2431"/>
<dbReference type="KEGG" id="bcv:Bcav_2431"/>
<dbReference type="eggNOG" id="COG1327">
    <property type="taxonomic scope" value="Bacteria"/>
</dbReference>
<dbReference type="HOGENOM" id="CLU_108412_1_0_11"/>
<dbReference type="OrthoDB" id="9807461at2"/>
<dbReference type="Proteomes" id="UP000007962">
    <property type="component" value="Chromosome"/>
</dbReference>
<dbReference type="GO" id="GO:0005524">
    <property type="term" value="F:ATP binding"/>
    <property type="evidence" value="ECO:0007669"/>
    <property type="project" value="UniProtKB-KW"/>
</dbReference>
<dbReference type="GO" id="GO:0003677">
    <property type="term" value="F:DNA binding"/>
    <property type="evidence" value="ECO:0007669"/>
    <property type="project" value="UniProtKB-KW"/>
</dbReference>
<dbReference type="GO" id="GO:0008270">
    <property type="term" value="F:zinc ion binding"/>
    <property type="evidence" value="ECO:0007669"/>
    <property type="project" value="UniProtKB-UniRule"/>
</dbReference>
<dbReference type="GO" id="GO:0045892">
    <property type="term" value="P:negative regulation of DNA-templated transcription"/>
    <property type="evidence" value="ECO:0007669"/>
    <property type="project" value="UniProtKB-UniRule"/>
</dbReference>
<dbReference type="HAMAP" id="MF_00440">
    <property type="entry name" value="NrdR"/>
    <property type="match status" value="1"/>
</dbReference>
<dbReference type="InterPro" id="IPR005144">
    <property type="entry name" value="ATP-cone_dom"/>
</dbReference>
<dbReference type="InterPro" id="IPR055173">
    <property type="entry name" value="NrdR-like_N"/>
</dbReference>
<dbReference type="InterPro" id="IPR003796">
    <property type="entry name" value="RNR_NrdR-like"/>
</dbReference>
<dbReference type="NCBIfam" id="TIGR00244">
    <property type="entry name" value="transcriptional regulator NrdR"/>
    <property type="match status" value="1"/>
</dbReference>
<dbReference type="PANTHER" id="PTHR30455">
    <property type="entry name" value="TRANSCRIPTIONAL REPRESSOR NRDR"/>
    <property type="match status" value="1"/>
</dbReference>
<dbReference type="PANTHER" id="PTHR30455:SF2">
    <property type="entry name" value="TRANSCRIPTIONAL REPRESSOR NRDR"/>
    <property type="match status" value="1"/>
</dbReference>
<dbReference type="Pfam" id="PF03477">
    <property type="entry name" value="ATP-cone"/>
    <property type="match status" value="1"/>
</dbReference>
<dbReference type="Pfam" id="PF22811">
    <property type="entry name" value="Zn_ribbon_NrdR"/>
    <property type="match status" value="1"/>
</dbReference>
<dbReference type="PROSITE" id="PS51161">
    <property type="entry name" value="ATP_CONE"/>
    <property type="match status" value="1"/>
</dbReference>
<protein>
    <recommendedName>
        <fullName evidence="1">Transcriptional repressor NrdR</fullName>
    </recommendedName>
</protein>
<organism>
    <name type="scientific">Beutenbergia cavernae (strain ATCC BAA-8 / DSM 12333 / CCUG 43141 / JCM 11478 / NBRC 16432 / NCIMB 13614 / HKI 0122)</name>
    <dbReference type="NCBI Taxonomy" id="471853"/>
    <lineage>
        <taxon>Bacteria</taxon>
        <taxon>Bacillati</taxon>
        <taxon>Actinomycetota</taxon>
        <taxon>Actinomycetes</taxon>
        <taxon>Micrococcales</taxon>
        <taxon>Beutenbergiaceae</taxon>
        <taxon>Beutenbergia</taxon>
    </lineage>
</organism>
<evidence type="ECO:0000255" key="1">
    <source>
        <dbReference type="HAMAP-Rule" id="MF_00440"/>
    </source>
</evidence>
<evidence type="ECO:0000256" key="2">
    <source>
        <dbReference type="SAM" id="MobiDB-lite"/>
    </source>
</evidence>
<comment type="function">
    <text evidence="1">Negatively regulates transcription of bacterial ribonucleotide reductase nrd genes and operons by binding to NrdR-boxes.</text>
</comment>
<comment type="cofactor">
    <cofactor evidence="1">
        <name>Zn(2+)</name>
        <dbReference type="ChEBI" id="CHEBI:29105"/>
    </cofactor>
    <text evidence="1">Binds 1 zinc ion.</text>
</comment>
<comment type="similarity">
    <text evidence="1">Belongs to the NrdR family.</text>
</comment>
<reference key="1">
    <citation type="journal article" date="2009" name="Stand. Genomic Sci.">
        <title>Complete genome sequence of Beutenbergia cavernae type strain (HKI 0122).</title>
        <authorList>
            <person name="Land M."/>
            <person name="Pukall R."/>
            <person name="Abt B."/>
            <person name="Goker M."/>
            <person name="Rohde M."/>
            <person name="Glavina Del Rio T."/>
            <person name="Tice H."/>
            <person name="Copeland A."/>
            <person name="Cheng J.F."/>
            <person name="Lucas S."/>
            <person name="Chen F."/>
            <person name="Nolan M."/>
            <person name="Bruce D."/>
            <person name="Goodwin L."/>
            <person name="Pitluck S."/>
            <person name="Ivanova N."/>
            <person name="Mavromatis K."/>
            <person name="Ovchinnikova G."/>
            <person name="Pati A."/>
            <person name="Chen A."/>
            <person name="Palaniappan K."/>
            <person name="Hauser L."/>
            <person name="Chang Y.J."/>
            <person name="Jefferies C.C."/>
            <person name="Saunders E."/>
            <person name="Brettin T."/>
            <person name="Detter J.C."/>
            <person name="Han C."/>
            <person name="Chain P."/>
            <person name="Bristow J."/>
            <person name="Eisen J.A."/>
            <person name="Markowitz V."/>
            <person name="Hugenholtz P."/>
            <person name="Kyrpides N.C."/>
            <person name="Klenk H.P."/>
            <person name="Lapidus A."/>
        </authorList>
    </citation>
    <scope>NUCLEOTIDE SEQUENCE [LARGE SCALE GENOMIC DNA]</scope>
    <source>
        <strain>ATCC BAA-8 / DSM 12333 / CCUG 43141 / JCM 11478 / NBRC 16432 / NCIMB 13614 / HKI 0122</strain>
    </source>
</reference>
<proteinExistence type="inferred from homology"/>
<gene>
    <name evidence="1" type="primary">nrdR</name>
    <name type="ordered locus">Bcav_2431</name>
</gene>
<keyword id="KW-0067">ATP-binding</keyword>
<keyword id="KW-0238">DNA-binding</keyword>
<keyword id="KW-0479">Metal-binding</keyword>
<keyword id="KW-0547">Nucleotide-binding</keyword>
<keyword id="KW-1185">Reference proteome</keyword>
<keyword id="KW-0678">Repressor</keyword>
<keyword id="KW-0804">Transcription</keyword>
<keyword id="KW-0805">Transcription regulation</keyword>
<keyword id="KW-0862">Zinc</keyword>
<keyword id="KW-0863">Zinc-finger</keyword>
<sequence length="170" mass="18636">MHCPFCRHPDSRVVDSRTSEDGSSIRRRRQCPECGRRFTTVETTSLSVVKRSGVAQPFSREKVVAGVRKACQGRPVSEDDLALLARRVEETIRATGAAEVDAHEVGLSILGPLRELDEVAYLRFASVYRGFSSLEDFEAAITALRAERENEGDPDADGSADAPVRLTTSV</sequence>
<name>NRDR_BEUC1</name>